<evidence type="ECO:0000255" key="1">
    <source>
        <dbReference type="HAMAP-Rule" id="MF_00575"/>
    </source>
</evidence>
<gene>
    <name evidence="1" type="primary">lpxH</name>
    <name type="ordered locus">SbBS512_E0450</name>
</gene>
<feature type="chain" id="PRO_1000129539" description="UDP-2,3-diacylglucosamine hydrolase">
    <location>
        <begin position="1"/>
        <end position="240"/>
    </location>
</feature>
<feature type="binding site" evidence="1">
    <location>
        <position position="8"/>
    </location>
    <ligand>
        <name>Mn(2+)</name>
        <dbReference type="ChEBI" id="CHEBI:29035"/>
        <label>1</label>
    </ligand>
</feature>
<feature type="binding site" evidence="1">
    <location>
        <position position="10"/>
    </location>
    <ligand>
        <name>Mn(2+)</name>
        <dbReference type="ChEBI" id="CHEBI:29035"/>
        <label>1</label>
    </ligand>
</feature>
<feature type="binding site" evidence="1">
    <location>
        <position position="41"/>
    </location>
    <ligand>
        <name>Mn(2+)</name>
        <dbReference type="ChEBI" id="CHEBI:29035"/>
        <label>1</label>
    </ligand>
</feature>
<feature type="binding site" evidence="1">
    <location>
        <position position="41"/>
    </location>
    <ligand>
        <name>Mn(2+)</name>
        <dbReference type="ChEBI" id="CHEBI:29035"/>
        <label>2</label>
    </ligand>
</feature>
<feature type="binding site" evidence="1">
    <location>
        <begin position="79"/>
        <end position="80"/>
    </location>
    <ligand>
        <name>substrate</name>
    </ligand>
</feature>
<feature type="binding site" evidence="1">
    <location>
        <position position="79"/>
    </location>
    <ligand>
        <name>Mn(2+)</name>
        <dbReference type="ChEBI" id="CHEBI:29035"/>
        <label>2</label>
    </ligand>
</feature>
<feature type="binding site" evidence="1">
    <location>
        <position position="114"/>
    </location>
    <ligand>
        <name>Mn(2+)</name>
        <dbReference type="ChEBI" id="CHEBI:29035"/>
        <label>2</label>
    </ligand>
</feature>
<feature type="binding site" evidence="1">
    <location>
        <position position="122"/>
    </location>
    <ligand>
        <name>substrate</name>
    </ligand>
</feature>
<feature type="binding site" evidence="1">
    <location>
        <position position="160"/>
    </location>
    <ligand>
        <name>substrate</name>
    </ligand>
</feature>
<feature type="binding site" evidence="1">
    <location>
        <position position="164"/>
    </location>
    <ligand>
        <name>substrate</name>
    </ligand>
</feature>
<feature type="binding site" evidence="1">
    <location>
        <position position="167"/>
    </location>
    <ligand>
        <name>substrate</name>
    </ligand>
</feature>
<feature type="binding site" evidence="1">
    <location>
        <position position="195"/>
    </location>
    <ligand>
        <name>Mn(2+)</name>
        <dbReference type="ChEBI" id="CHEBI:29035"/>
        <label>2</label>
    </ligand>
</feature>
<feature type="binding site" evidence="1">
    <location>
        <position position="195"/>
    </location>
    <ligand>
        <name>substrate</name>
    </ligand>
</feature>
<feature type="binding site" evidence="1">
    <location>
        <position position="197"/>
    </location>
    <ligand>
        <name>Mn(2+)</name>
        <dbReference type="ChEBI" id="CHEBI:29035"/>
        <label>1</label>
    </ligand>
</feature>
<proteinExistence type="inferred from homology"/>
<keyword id="KW-0997">Cell inner membrane</keyword>
<keyword id="KW-1003">Cell membrane</keyword>
<keyword id="KW-0378">Hydrolase</keyword>
<keyword id="KW-0441">Lipid A biosynthesis</keyword>
<keyword id="KW-0444">Lipid biosynthesis</keyword>
<keyword id="KW-0443">Lipid metabolism</keyword>
<keyword id="KW-0464">Manganese</keyword>
<keyword id="KW-0472">Membrane</keyword>
<keyword id="KW-0479">Metal-binding</keyword>
<keyword id="KW-1185">Reference proteome</keyword>
<organism>
    <name type="scientific">Shigella boydii serotype 18 (strain CDC 3083-94 / BS512)</name>
    <dbReference type="NCBI Taxonomy" id="344609"/>
    <lineage>
        <taxon>Bacteria</taxon>
        <taxon>Pseudomonadati</taxon>
        <taxon>Pseudomonadota</taxon>
        <taxon>Gammaproteobacteria</taxon>
        <taxon>Enterobacterales</taxon>
        <taxon>Enterobacteriaceae</taxon>
        <taxon>Shigella</taxon>
    </lineage>
</organism>
<name>LPXH_SHIB3</name>
<sequence length="240" mass="26924">MATLFIADLHLCVEEPAITAGFLRFLAGEARKADALYILGDLFEAWIGDDDPNPLHRQMAAAIKAVSDSGVPCYFIHGNRDFLLGKRFARESGMTLLPEEKVLELYGRRVLIMHGDTLCTDDAGYQAFRAKVHKPWLQMLFLALPLFVRKRIAARMRANSKEANSSKSLAIMDVNQNAVVSAMEKHQVQWLIHGHTHRPAVHELIANQQPAFRVVLGAWHTEGSMVKVTADDVELIHFPF</sequence>
<comment type="function">
    <text evidence="1">Hydrolyzes the pyrophosphate bond of UDP-2,3-diacylglucosamine to yield 2,3-diacylglucosamine 1-phosphate (lipid X) and UMP by catalyzing the attack of water at the alpha-P atom. Involved in the biosynthesis of lipid A, a phosphorylated glycolipid that anchors the lipopolysaccharide to the outer membrane of the cell.</text>
</comment>
<comment type="catalytic activity">
    <reaction evidence="1">
        <text>UDP-2-N,3-O-bis[(3R)-3-hydroxytetradecanoyl]-alpha-D-glucosamine + H2O = 2-N,3-O-bis[(3R)-3-hydroxytetradecanoyl]-alpha-D-glucosaminyl 1-phosphate + UMP + 2 H(+)</text>
        <dbReference type="Rhea" id="RHEA:25213"/>
        <dbReference type="ChEBI" id="CHEBI:15377"/>
        <dbReference type="ChEBI" id="CHEBI:15378"/>
        <dbReference type="ChEBI" id="CHEBI:57865"/>
        <dbReference type="ChEBI" id="CHEBI:57957"/>
        <dbReference type="ChEBI" id="CHEBI:78847"/>
        <dbReference type="EC" id="3.6.1.54"/>
    </reaction>
</comment>
<comment type="cofactor">
    <cofactor evidence="1">
        <name>Mn(2+)</name>
        <dbReference type="ChEBI" id="CHEBI:29035"/>
    </cofactor>
    <text evidence="1">Binds 2 Mn(2+) ions per subunit in a binuclear metal center.</text>
</comment>
<comment type="pathway">
    <text evidence="1">Glycolipid biosynthesis; lipid IV(A) biosynthesis; lipid IV(A) from (3R)-3-hydroxytetradecanoyl-[acyl-carrier-protein] and UDP-N-acetyl-alpha-D-glucosamine: step 4/6.</text>
</comment>
<comment type="subcellular location">
    <subcellularLocation>
        <location evidence="1">Cell inner membrane</location>
        <topology evidence="1">Peripheral membrane protein</topology>
        <orientation evidence="1">Cytoplasmic side</orientation>
    </subcellularLocation>
</comment>
<comment type="similarity">
    <text evidence="1">Belongs to the LpxH family.</text>
</comment>
<protein>
    <recommendedName>
        <fullName evidence="1">UDP-2,3-diacylglucosamine hydrolase</fullName>
        <ecNumber evidence="1">3.6.1.54</ecNumber>
    </recommendedName>
    <alternativeName>
        <fullName evidence="1">UDP-2,3-diacylglucosamine diphosphatase</fullName>
    </alternativeName>
</protein>
<dbReference type="EC" id="3.6.1.54" evidence="1"/>
<dbReference type="EMBL" id="CP001063">
    <property type="protein sequence ID" value="ACD09561.1"/>
    <property type="molecule type" value="Genomic_DNA"/>
</dbReference>
<dbReference type="RefSeq" id="WP_000212252.1">
    <property type="nucleotide sequence ID" value="NC_010658.1"/>
</dbReference>
<dbReference type="SMR" id="B2TTB5"/>
<dbReference type="STRING" id="344609.SbBS512_E0450"/>
<dbReference type="GeneID" id="75204390"/>
<dbReference type="KEGG" id="sbc:SbBS512_E0450"/>
<dbReference type="HOGENOM" id="CLU_074586_0_0_6"/>
<dbReference type="UniPathway" id="UPA00359">
    <property type="reaction ID" value="UER00480"/>
</dbReference>
<dbReference type="Proteomes" id="UP000001030">
    <property type="component" value="Chromosome"/>
</dbReference>
<dbReference type="GO" id="GO:0005737">
    <property type="term" value="C:cytoplasm"/>
    <property type="evidence" value="ECO:0007669"/>
    <property type="project" value="InterPro"/>
</dbReference>
<dbReference type="GO" id="GO:0019897">
    <property type="term" value="C:extrinsic component of plasma membrane"/>
    <property type="evidence" value="ECO:0007669"/>
    <property type="project" value="UniProtKB-UniRule"/>
</dbReference>
<dbReference type="GO" id="GO:0030145">
    <property type="term" value="F:manganese ion binding"/>
    <property type="evidence" value="ECO:0007669"/>
    <property type="project" value="UniProtKB-UniRule"/>
</dbReference>
<dbReference type="GO" id="GO:0008758">
    <property type="term" value="F:UDP-2,3-diacylglucosamine hydrolase activity"/>
    <property type="evidence" value="ECO:0007669"/>
    <property type="project" value="UniProtKB-UniRule"/>
</dbReference>
<dbReference type="GO" id="GO:0009245">
    <property type="term" value="P:lipid A biosynthetic process"/>
    <property type="evidence" value="ECO:0007669"/>
    <property type="project" value="UniProtKB-UniRule"/>
</dbReference>
<dbReference type="CDD" id="cd07398">
    <property type="entry name" value="MPP_YbbF-LpxH"/>
    <property type="match status" value="1"/>
</dbReference>
<dbReference type="FunFam" id="3.60.21.10:FF:000012">
    <property type="entry name" value="UDP-2,3-diacylglucosamine hydrolase"/>
    <property type="match status" value="1"/>
</dbReference>
<dbReference type="Gene3D" id="3.60.21.10">
    <property type="match status" value="1"/>
</dbReference>
<dbReference type="HAMAP" id="MF_00575">
    <property type="entry name" value="LpxH"/>
    <property type="match status" value="1"/>
</dbReference>
<dbReference type="InterPro" id="IPR004843">
    <property type="entry name" value="Calcineurin-like_PHP_ApaH"/>
</dbReference>
<dbReference type="InterPro" id="IPR043461">
    <property type="entry name" value="LpxH-like"/>
</dbReference>
<dbReference type="InterPro" id="IPR029052">
    <property type="entry name" value="Metallo-depent_PP-like"/>
</dbReference>
<dbReference type="InterPro" id="IPR010138">
    <property type="entry name" value="UDP-diacylglucosamine_Hdrlase"/>
</dbReference>
<dbReference type="NCBIfam" id="TIGR01854">
    <property type="entry name" value="lipid_A_lpxH"/>
    <property type="match status" value="1"/>
</dbReference>
<dbReference type="NCBIfam" id="NF003743">
    <property type="entry name" value="PRK05340.1"/>
    <property type="match status" value="1"/>
</dbReference>
<dbReference type="PANTHER" id="PTHR34990:SF1">
    <property type="entry name" value="UDP-2,3-DIACYLGLUCOSAMINE HYDROLASE"/>
    <property type="match status" value="1"/>
</dbReference>
<dbReference type="PANTHER" id="PTHR34990">
    <property type="entry name" value="UDP-2,3-DIACYLGLUCOSAMINE HYDROLASE-RELATED"/>
    <property type="match status" value="1"/>
</dbReference>
<dbReference type="Pfam" id="PF00149">
    <property type="entry name" value="Metallophos"/>
    <property type="match status" value="1"/>
</dbReference>
<dbReference type="SUPFAM" id="SSF56300">
    <property type="entry name" value="Metallo-dependent phosphatases"/>
    <property type="match status" value="1"/>
</dbReference>
<accession>B2TTB5</accession>
<reference key="1">
    <citation type="submission" date="2008-05" db="EMBL/GenBank/DDBJ databases">
        <title>Complete sequence of Shigella boydii serotype 18 strain BS512.</title>
        <authorList>
            <person name="Rasko D.A."/>
            <person name="Rosovitz M."/>
            <person name="Maurelli A.T."/>
            <person name="Myers G."/>
            <person name="Seshadri R."/>
            <person name="Cer R."/>
            <person name="Jiang L."/>
            <person name="Ravel J."/>
            <person name="Sebastian Y."/>
        </authorList>
    </citation>
    <scope>NUCLEOTIDE SEQUENCE [LARGE SCALE GENOMIC DNA]</scope>
    <source>
        <strain>CDC 3083-94 / BS512</strain>
    </source>
</reference>